<accession>A9R806</accession>
<keyword id="KW-0067">ATP-binding</keyword>
<keyword id="KW-0963">Cytoplasm</keyword>
<keyword id="KW-0418">Kinase</keyword>
<keyword id="KW-0460">Magnesium</keyword>
<keyword id="KW-0479">Metal-binding</keyword>
<keyword id="KW-0546">Nucleotide metabolism</keyword>
<keyword id="KW-0547">Nucleotide-binding</keyword>
<keyword id="KW-0597">Phosphoprotein</keyword>
<keyword id="KW-0808">Transferase</keyword>
<proteinExistence type="inferred from homology"/>
<gene>
    <name evidence="1" type="primary">ndk</name>
    <name type="ordered locus">YpAngola_A0422</name>
</gene>
<feature type="chain" id="PRO_1000125035" description="Nucleoside diphosphate kinase">
    <location>
        <begin position="1"/>
        <end position="142"/>
    </location>
</feature>
<feature type="active site" description="Pros-phosphohistidine intermediate" evidence="1">
    <location>
        <position position="117"/>
    </location>
</feature>
<feature type="binding site" evidence="1">
    <location>
        <position position="11"/>
    </location>
    <ligand>
        <name>ATP</name>
        <dbReference type="ChEBI" id="CHEBI:30616"/>
    </ligand>
</feature>
<feature type="binding site" evidence="1">
    <location>
        <position position="59"/>
    </location>
    <ligand>
        <name>ATP</name>
        <dbReference type="ChEBI" id="CHEBI:30616"/>
    </ligand>
</feature>
<feature type="binding site" evidence="1">
    <location>
        <position position="87"/>
    </location>
    <ligand>
        <name>ATP</name>
        <dbReference type="ChEBI" id="CHEBI:30616"/>
    </ligand>
</feature>
<feature type="binding site" evidence="1">
    <location>
        <position position="93"/>
    </location>
    <ligand>
        <name>ATP</name>
        <dbReference type="ChEBI" id="CHEBI:30616"/>
    </ligand>
</feature>
<feature type="binding site" evidence="1">
    <location>
        <position position="104"/>
    </location>
    <ligand>
        <name>ATP</name>
        <dbReference type="ChEBI" id="CHEBI:30616"/>
    </ligand>
</feature>
<feature type="binding site" evidence="1">
    <location>
        <position position="114"/>
    </location>
    <ligand>
        <name>ATP</name>
        <dbReference type="ChEBI" id="CHEBI:30616"/>
    </ligand>
</feature>
<comment type="function">
    <text evidence="1">Major role in the synthesis of nucleoside triphosphates other than ATP. The ATP gamma phosphate is transferred to the NDP beta phosphate via a ping-pong mechanism, using a phosphorylated active-site intermediate.</text>
</comment>
<comment type="catalytic activity">
    <reaction evidence="1">
        <text>a 2'-deoxyribonucleoside 5'-diphosphate + ATP = a 2'-deoxyribonucleoside 5'-triphosphate + ADP</text>
        <dbReference type="Rhea" id="RHEA:44640"/>
        <dbReference type="ChEBI" id="CHEBI:30616"/>
        <dbReference type="ChEBI" id="CHEBI:61560"/>
        <dbReference type="ChEBI" id="CHEBI:73316"/>
        <dbReference type="ChEBI" id="CHEBI:456216"/>
        <dbReference type="EC" id="2.7.4.6"/>
    </reaction>
</comment>
<comment type="catalytic activity">
    <reaction evidence="1">
        <text>a ribonucleoside 5'-diphosphate + ATP = a ribonucleoside 5'-triphosphate + ADP</text>
        <dbReference type="Rhea" id="RHEA:18113"/>
        <dbReference type="ChEBI" id="CHEBI:30616"/>
        <dbReference type="ChEBI" id="CHEBI:57930"/>
        <dbReference type="ChEBI" id="CHEBI:61557"/>
        <dbReference type="ChEBI" id="CHEBI:456216"/>
        <dbReference type="EC" id="2.7.4.6"/>
    </reaction>
</comment>
<comment type="cofactor">
    <cofactor evidence="1">
        <name>Mg(2+)</name>
        <dbReference type="ChEBI" id="CHEBI:18420"/>
    </cofactor>
</comment>
<comment type="subunit">
    <text evidence="1">Homotetramer.</text>
</comment>
<comment type="subcellular location">
    <subcellularLocation>
        <location evidence="1">Cytoplasm</location>
    </subcellularLocation>
</comment>
<comment type="similarity">
    <text evidence="1">Belongs to the NDK family.</text>
</comment>
<evidence type="ECO:0000255" key="1">
    <source>
        <dbReference type="HAMAP-Rule" id="MF_00451"/>
    </source>
</evidence>
<organism>
    <name type="scientific">Yersinia pestis bv. Antiqua (strain Angola)</name>
    <dbReference type="NCBI Taxonomy" id="349746"/>
    <lineage>
        <taxon>Bacteria</taxon>
        <taxon>Pseudomonadati</taxon>
        <taxon>Pseudomonadota</taxon>
        <taxon>Gammaproteobacteria</taxon>
        <taxon>Enterobacterales</taxon>
        <taxon>Yersiniaceae</taxon>
        <taxon>Yersinia</taxon>
    </lineage>
</organism>
<sequence>MALERTFSIIKPNAVANNDIGAIYARFERAGFKIIAAKMLHLTKEQAEGFYAEHKGRPFFDGLVEFMTSGPIMVQVLEGENAVQRHRDIMGATNPDNALAGTLRADFSDSFTANAVHGSDAVESAQREIAYFFAADEIFPRS</sequence>
<protein>
    <recommendedName>
        <fullName evidence="1">Nucleoside diphosphate kinase</fullName>
        <shortName evidence="1">NDK</shortName>
        <shortName evidence="1">NDP kinase</shortName>
        <ecNumber evidence="1">2.7.4.6</ecNumber>
    </recommendedName>
    <alternativeName>
        <fullName evidence="1">Nucleoside-2-P kinase</fullName>
    </alternativeName>
</protein>
<reference key="1">
    <citation type="journal article" date="2010" name="J. Bacteriol.">
        <title>Genome sequence of the deep-rooted Yersinia pestis strain Angola reveals new insights into the evolution and pangenome of the plague bacterium.</title>
        <authorList>
            <person name="Eppinger M."/>
            <person name="Worsham P.L."/>
            <person name="Nikolich M.P."/>
            <person name="Riley D.R."/>
            <person name="Sebastian Y."/>
            <person name="Mou S."/>
            <person name="Achtman M."/>
            <person name="Lindler L.E."/>
            <person name="Ravel J."/>
        </authorList>
    </citation>
    <scope>NUCLEOTIDE SEQUENCE [LARGE SCALE GENOMIC DNA]</scope>
    <source>
        <strain>Angola</strain>
    </source>
</reference>
<dbReference type="EC" id="2.7.4.6" evidence="1"/>
<dbReference type="EMBL" id="CP000901">
    <property type="protein sequence ID" value="ABX86543.1"/>
    <property type="molecule type" value="Genomic_DNA"/>
</dbReference>
<dbReference type="RefSeq" id="WP_002209821.1">
    <property type="nucleotide sequence ID" value="NZ_CP009935.1"/>
</dbReference>
<dbReference type="SMR" id="A9R806"/>
<dbReference type="GeneID" id="57975841"/>
<dbReference type="KEGG" id="ypg:YpAngola_A0422"/>
<dbReference type="PATRIC" id="fig|349746.12.peg.1376"/>
<dbReference type="GO" id="GO:0005737">
    <property type="term" value="C:cytoplasm"/>
    <property type="evidence" value="ECO:0007669"/>
    <property type="project" value="UniProtKB-SubCell"/>
</dbReference>
<dbReference type="GO" id="GO:0005524">
    <property type="term" value="F:ATP binding"/>
    <property type="evidence" value="ECO:0007669"/>
    <property type="project" value="UniProtKB-UniRule"/>
</dbReference>
<dbReference type="GO" id="GO:0046872">
    <property type="term" value="F:metal ion binding"/>
    <property type="evidence" value="ECO:0007669"/>
    <property type="project" value="UniProtKB-KW"/>
</dbReference>
<dbReference type="GO" id="GO:0004550">
    <property type="term" value="F:nucleoside diphosphate kinase activity"/>
    <property type="evidence" value="ECO:0007669"/>
    <property type="project" value="UniProtKB-UniRule"/>
</dbReference>
<dbReference type="GO" id="GO:0006241">
    <property type="term" value="P:CTP biosynthetic process"/>
    <property type="evidence" value="ECO:0007669"/>
    <property type="project" value="UniProtKB-UniRule"/>
</dbReference>
<dbReference type="GO" id="GO:0006183">
    <property type="term" value="P:GTP biosynthetic process"/>
    <property type="evidence" value="ECO:0007669"/>
    <property type="project" value="UniProtKB-UniRule"/>
</dbReference>
<dbReference type="GO" id="GO:0006228">
    <property type="term" value="P:UTP biosynthetic process"/>
    <property type="evidence" value="ECO:0007669"/>
    <property type="project" value="UniProtKB-UniRule"/>
</dbReference>
<dbReference type="CDD" id="cd04413">
    <property type="entry name" value="NDPk_I"/>
    <property type="match status" value="1"/>
</dbReference>
<dbReference type="FunFam" id="3.30.70.141:FF:000001">
    <property type="entry name" value="Nucleoside diphosphate kinase"/>
    <property type="match status" value="1"/>
</dbReference>
<dbReference type="Gene3D" id="3.30.70.141">
    <property type="entry name" value="Nucleoside diphosphate kinase-like domain"/>
    <property type="match status" value="1"/>
</dbReference>
<dbReference type="HAMAP" id="MF_00451">
    <property type="entry name" value="NDP_kinase"/>
    <property type="match status" value="1"/>
</dbReference>
<dbReference type="InterPro" id="IPR034907">
    <property type="entry name" value="NDK-like_dom"/>
</dbReference>
<dbReference type="InterPro" id="IPR036850">
    <property type="entry name" value="NDK-like_dom_sf"/>
</dbReference>
<dbReference type="InterPro" id="IPR001564">
    <property type="entry name" value="Nucleoside_diP_kinase"/>
</dbReference>
<dbReference type="InterPro" id="IPR023005">
    <property type="entry name" value="Nucleoside_diP_kinase_AS"/>
</dbReference>
<dbReference type="NCBIfam" id="NF001908">
    <property type="entry name" value="PRK00668.1"/>
    <property type="match status" value="1"/>
</dbReference>
<dbReference type="PANTHER" id="PTHR46161">
    <property type="entry name" value="NUCLEOSIDE DIPHOSPHATE KINASE"/>
    <property type="match status" value="1"/>
</dbReference>
<dbReference type="PANTHER" id="PTHR46161:SF3">
    <property type="entry name" value="NUCLEOSIDE DIPHOSPHATE KINASE DDB_G0292928-RELATED"/>
    <property type="match status" value="1"/>
</dbReference>
<dbReference type="Pfam" id="PF00334">
    <property type="entry name" value="NDK"/>
    <property type="match status" value="1"/>
</dbReference>
<dbReference type="PRINTS" id="PR01243">
    <property type="entry name" value="NUCDPKINASE"/>
</dbReference>
<dbReference type="SMART" id="SM00562">
    <property type="entry name" value="NDK"/>
    <property type="match status" value="1"/>
</dbReference>
<dbReference type="SUPFAM" id="SSF54919">
    <property type="entry name" value="Nucleoside diphosphate kinase, NDK"/>
    <property type="match status" value="1"/>
</dbReference>
<dbReference type="PROSITE" id="PS00469">
    <property type="entry name" value="NDPK"/>
    <property type="match status" value="1"/>
</dbReference>
<dbReference type="PROSITE" id="PS51374">
    <property type="entry name" value="NDPK_LIKE"/>
    <property type="match status" value="1"/>
</dbReference>
<name>NDK_YERPG</name>